<sequence length="176" mass="20107">MLQFLNRCSRGRGAWLLMALTAFLLELTALYFQHIMLLQPCVMCIYERVALFGILGASLLGAIAPRSPLRYLAIAVWIYSAWKGVQLAWAHTMLQLNPSPFNTCDFFVNFPSWLPLDKWLPAVFAASGDCSERQWQFMSLEMPQWLVGIFAAYLVIAVLVLISQFVKPKRRDLFGR</sequence>
<reference key="1">
    <citation type="journal article" date="2006" name="J. Bacteriol.">
        <title>Complete genome sequence of Yersinia pestis strains Antiqua and Nepal516: evidence of gene reduction in an emerging pathogen.</title>
        <authorList>
            <person name="Chain P.S.G."/>
            <person name="Hu P."/>
            <person name="Malfatti S.A."/>
            <person name="Radnedge L."/>
            <person name="Larimer F."/>
            <person name="Vergez L.M."/>
            <person name="Worsham P."/>
            <person name="Chu M.C."/>
            <person name="Andersen G.L."/>
        </authorList>
    </citation>
    <scope>NUCLEOTIDE SEQUENCE [LARGE SCALE GENOMIC DNA]</scope>
    <source>
        <strain>Antiqua</strain>
    </source>
</reference>
<proteinExistence type="inferred from homology"/>
<protein>
    <recommendedName>
        <fullName evidence="1">Disulfide bond formation protein B</fullName>
    </recommendedName>
    <alternativeName>
        <fullName evidence="1">Disulfide oxidoreductase</fullName>
    </alternativeName>
</protein>
<keyword id="KW-0997">Cell inner membrane</keyword>
<keyword id="KW-1003">Cell membrane</keyword>
<keyword id="KW-0143">Chaperone</keyword>
<keyword id="KW-1015">Disulfide bond</keyword>
<keyword id="KW-0249">Electron transport</keyword>
<keyword id="KW-0472">Membrane</keyword>
<keyword id="KW-0560">Oxidoreductase</keyword>
<keyword id="KW-0676">Redox-active center</keyword>
<keyword id="KW-0812">Transmembrane</keyword>
<keyword id="KW-1133">Transmembrane helix</keyword>
<keyword id="KW-0813">Transport</keyword>
<dbReference type="EMBL" id="CP000308">
    <property type="protein sequence ID" value="ABG13468.1"/>
    <property type="status" value="ALT_INIT"/>
    <property type="molecule type" value="Genomic_DNA"/>
</dbReference>
<dbReference type="RefSeq" id="WP_002227934.1">
    <property type="nucleotide sequence ID" value="NZ_CP009906.1"/>
</dbReference>
<dbReference type="SMR" id="Q1C7V4"/>
<dbReference type="GeneID" id="57976524"/>
<dbReference type="KEGG" id="ypa:YPA_1501"/>
<dbReference type="Proteomes" id="UP000001971">
    <property type="component" value="Chromosome"/>
</dbReference>
<dbReference type="GO" id="GO:0005886">
    <property type="term" value="C:plasma membrane"/>
    <property type="evidence" value="ECO:0007669"/>
    <property type="project" value="UniProtKB-SubCell"/>
</dbReference>
<dbReference type="GO" id="GO:0009055">
    <property type="term" value="F:electron transfer activity"/>
    <property type="evidence" value="ECO:0007669"/>
    <property type="project" value="UniProtKB-UniRule"/>
</dbReference>
<dbReference type="GO" id="GO:0015035">
    <property type="term" value="F:protein-disulfide reductase activity"/>
    <property type="evidence" value="ECO:0007669"/>
    <property type="project" value="UniProtKB-UniRule"/>
</dbReference>
<dbReference type="GO" id="GO:0006457">
    <property type="term" value="P:protein folding"/>
    <property type="evidence" value="ECO:0007669"/>
    <property type="project" value="InterPro"/>
</dbReference>
<dbReference type="FunFam" id="1.20.1550.10:FF:000001">
    <property type="entry name" value="Disulfide bond formation protein B"/>
    <property type="match status" value="1"/>
</dbReference>
<dbReference type="Gene3D" id="1.20.1550.10">
    <property type="entry name" value="DsbB-like"/>
    <property type="match status" value="1"/>
</dbReference>
<dbReference type="HAMAP" id="MF_00286">
    <property type="entry name" value="DsbB"/>
    <property type="match status" value="1"/>
</dbReference>
<dbReference type="InterPro" id="IPR003752">
    <property type="entry name" value="DiS_bond_form_DsbB/BdbC"/>
</dbReference>
<dbReference type="InterPro" id="IPR022920">
    <property type="entry name" value="Disulphide_bond_form_DsbB"/>
</dbReference>
<dbReference type="InterPro" id="IPR050183">
    <property type="entry name" value="DsbB"/>
</dbReference>
<dbReference type="InterPro" id="IPR023380">
    <property type="entry name" value="DsbB-like_sf"/>
</dbReference>
<dbReference type="NCBIfam" id="NF002485">
    <property type="entry name" value="PRK01749.1"/>
    <property type="match status" value="1"/>
</dbReference>
<dbReference type="PANTHER" id="PTHR36570">
    <property type="entry name" value="DISULFIDE BOND FORMATION PROTEIN B"/>
    <property type="match status" value="1"/>
</dbReference>
<dbReference type="PANTHER" id="PTHR36570:SF2">
    <property type="entry name" value="DISULFIDE BOND FORMATION PROTEIN B"/>
    <property type="match status" value="1"/>
</dbReference>
<dbReference type="Pfam" id="PF02600">
    <property type="entry name" value="DsbB"/>
    <property type="match status" value="1"/>
</dbReference>
<dbReference type="SUPFAM" id="SSF158442">
    <property type="entry name" value="DsbB-like"/>
    <property type="match status" value="1"/>
</dbReference>
<accession>Q1C7V4</accession>
<name>DSBB_YERPA</name>
<comment type="function">
    <text evidence="1">Required for disulfide bond formation in some periplasmic proteins. Acts by oxidizing the DsbA protein.</text>
</comment>
<comment type="subcellular location">
    <subcellularLocation>
        <location evidence="1">Cell inner membrane</location>
        <topology evidence="1">Multi-pass membrane protein</topology>
    </subcellularLocation>
</comment>
<comment type="similarity">
    <text evidence="1">Belongs to the DsbB family.</text>
</comment>
<comment type="sequence caution" evidence="2">
    <conflict type="erroneous initiation">
        <sequence resource="EMBL-CDS" id="ABG13468"/>
    </conflict>
</comment>
<organism>
    <name type="scientific">Yersinia pestis bv. Antiqua (strain Antiqua)</name>
    <dbReference type="NCBI Taxonomy" id="360102"/>
    <lineage>
        <taxon>Bacteria</taxon>
        <taxon>Pseudomonadati</taxon>
        <taxon>Pseudomonadota</taxon>
        <taxon>Gammaproteobacteria</taxon>
        <taxon>Enterobacterales</taxon>
        <taxon>Yersiniaceae</taxon>
        <taxon>Yersinia</taxon>
    </lineage>
</organism>
<evidence type="ECO:0000255" key="1">
    <source>
        <dbReference type="HAMAP-Rule" id="MF_00286"/>
    </source>
</evidence>
<evidence type="ECO:0000305" key="2"/>
<gene>
    <name evidence="1" type="primary">dsbB</name>
    <name type="ordered locus">YPA_1501</name>
</gene>
<feature type="chain" id="PRO_0000298426" description="Disulfide bond formation protein B">
    <location>
        <begin position="1"/>
        <end position="176"/>
    </location>
</feature>
<feature type="topological domain" description="Cytoplasmic" evidence="1">
    <location>
        <begin position="1"/>
        <end position="14"/>
    </location>
</feature>
<feature type="transmembrane region" description="Helical" evidence="1">
    <location>
        <begin position="15"/>
        <end position="31"/>
    </location>
</feature>
<feature type="topological domain" description="Periplasmic" evidence="1">
    <location>
        <begin position="32"/>
        <end position="49"/>
    </location>
</feature>
<feature type="transmembrane region" description="Helical" evidence="1">
    <location>
        <begin position="50"/>
        <end position="65"/>
    </location>
</feature>
<feature type="topological domain" description="Cytoplasmic" evidence="1">
    <location>
        <begin position="66"/>
        <end position="71"/>
    </location>
</feature>
<feature type="transmembrane region" description="Helical" evidence="1">
    <location>
        <begin position="72"/>
        <end position="89"/>
    </location>
</feature>
<feature type="topological domain" description="Periplasmic" evidence="1">
    <location>
        <begin position="90"/>
        <end position="144"/>
    </location>
</feature>
<feature type="transmembrane region" description="Helical" evidence="1">
    <location>
        <begin position="145"/>
        <end position="163"/>
    </location>
</feature>
<feature type="topological domain" description="Cytoplasmic" evidence="1">
    <location>
        <begin position="164"/>
        <end position="176"/>
    </location>
</feature>
<feature type="disulfide bond" description="Redox-active" evidence="1">
    <location>
        <begin position="41"/>
        <end position="44"/>
    </location>
</feature>
<feature type="disulfide bond" description="Redox-active" evidence="1">
    <location>
        <begin position="104"/>
        <end position="130"/>
    </location>
</feature>